<comment type="function">
    <text evidence="1">eIF-2 functions in the early steps of protein synthesis by forming a ternary complex with GTP and initiator tRNA.</text>
</comment>
<comment type="subunit">
    <text evidence="1">Heterotrimer composed of an alpha, a beta and a gamma chain.</text>
</comment>
<comment type="similarity">
    <text evidence="1">Belongs to the eIF-2-alpha family.</text>
</comment>
<organism>
    <name type="scientific">Saccharolobus islandicus (strain M.16.4 / Kamchatka #3)</name>
    <name type="common">Sulfolobus islandicus</name>
    <dbReference type="NCBI Taxonomy" id="426118"/>
    <lineage>
        <taxon>Archaea</taxon>
        <taxon>Thermoproteota</taxon>
        <taxon>Thermoprotei</taxon>
        <taxon>Sulfolobales</taxon>
        <taxon>Sulfolobaceae</taxon>
        <taxon>Saccharolobus</taxon>
    </lineage>
</organism>
<keyword id="KW-0396">Initiation factor</keyword>
<keyword id="KW-0648">Protein biosynthesis</keyword>
<keyword id="KW-0694">RNA-binding</keyword>
<gene>
    <name evidence="1" type="primary">eif2a</name>
    <name type="ordered locus">M164_1158</name>
</gene>
<accession>C4KGP8</accession>
<feature type="chain" id="PRO_1000204371" description="Translation initiation factor 2 subunit alpha">
    <location>
        <begin position="1"/>
        <end position="266"/>
    </location>
</feature>
<feature type="domain" description="S1 motif" evidence="1">
    <location>
        <begin position="12"/>
        <end position="83"/>
    </location>
</feature>
<sequence>MIYSRSRLPSEGEILIATVKQVFDYGSYVTLDEYGGLQAFLPWSEVSSKWVKNIRDVLKENRKVVVKVIRVDRRKGTVDVSLKKVTDDERRKKNLQWKKIQRLDKILELVSQQLKLSEKDAWEQVAWKLEAKYGDPISAIERAVKEGEKILIDAGVPEIWIKPLLEEAAKHTEEKKVKMSGLITVKTSEPLGVQKIKEVISKALENIEQDYESILNVKIYTIGAPRYRVDVVGTNPKDASEALNQIISNLIKIGKEENVDISVVKK</sequence>
<reference key="1">
    <citation type="journal article" date="2009" name="Proc. Natl. Acad. Sci. U.S.A.">
        <title>Biogeography of the Sulfolobus islandicus pan-genome.</title>
        <authorList>
            <person name="Reno M.L."/>
            <person name="Held N.L."/>
            <person name="Fields C.J."/>
            <person name="Burke P.V."/>
            <person name="Whitaker R.J."/>
        </authorList>
    </citation>
    <scope>NUCLEOTIDE SEQUENCE [LARGE SCALE GENOMIC DNA]</scope>
    <source>
        <strain>M.16.4 / Kamchatka #3</strain>
    </source>
</reference>
<dbReference type="EMBL" id="CP001402">
    <property type="protein sequence ID" value="ACR41762.1"/>
    <property type="molecule type" value="Genomic_DNA"/>
</dbReference>
<dbReference type="RefSeq" id="WP_012711192.1">
    <property type="nucleotide sequence ID" value="NC_012726.1"/>
</dbReference>
<dbReference type="SMR" id="C4KGP8"/>
<dbReference type="KEGG" id="sid:M164_1158"/>
<dbReference type="HOGENOM" id="CLU_033458_0_2_2"/>
<dbReference type="Proteomes" id="UP000001479">
    <property type="component" value="Chromosome"/>
</dbReference>
<dbReference type="GO" id="GO:0043022">
    <property type="term" value="F:ribosome binding"/>
    <property type="evidence" value="ECO:0007669"/>
    <property type="project" value="TreeGrafter"/>
</dbReference>
<dbReference type="GO" id="GO:0003723">
    <property type="term" value="F:RNA binding"/>
    <property type="evidence" value="ECO:0007669"/>
    <property type="project" value="UniProtKB-UniRule"/>
</dbReference>
<dbReference type="GO" id="GO:0003743">
    <property type="term" value="F:translation initiation factor activity"/>
    <property type="evidence" value="ECO:0007669"/>
    <property type="project" value="UniProtKB-UniRule"/>
</dbReference>
<dbReference type="CDD" id="cd04452">
    <property type="entry name" value="S1_IF2_alpha"/>
    <property type="match status" value="1"/>
</dbReference>
<dbReference type="FunFam" id="2.40.50.140:FF:000015">
    <property type="entry name" value="Eukaryotic translation initiation factor 2 subunit alpha"/>
    <property type="match status" value="1"/>
</dbReference>
<dbReference type="Gene3D" id="3.30.70.1130">
    <property type="entry name" value="EIF_2_alpha"/>
    <property type="match status" value="1"/>
</dbReference>
<dbReference type="Gene3D" id="2.40.50.140">
    <property type="entry name" value="Nucleic acid-binding proteins"/>
    <property type="match status" value="1"/>
</dbReference>
<dbReference type="Gene3D" id="1.10.150.190">
    <property type="entry name" value="Translation initiation factor 2, subunit 1, domain 2"/>
    <property type="match status" value="1"/>
</dbReference>
<dbReference type="HAMAP" id="MF_00231">
    <property type="entry name" value="eIF_2_alpha"/>
    <property type="match status" value="1"/>
</dbReference>
<dbReference type="InterPro" id="IPR012340">
    <property type="entry name" value="NA-bd_OB-fold"/>
</dbReference>
<dbReference type="InterPro" id="IPR003029">
    <property type="entry name" value="S1_domain"/>
</dbReference>
<dbReference type="InterPro" id="IPR044126">
    <property type="entry name" value="S1_IF2_alpha"/>
</dbReference>
<dbReference type="InterPro" id="IPR022964">
    <property type="entry name" value="TIF2_asu_arc"/>
</dbReference>
<dbReference type="InterPro" id="IPR024055">
    <property type="entry name" value="TIF2_asu_C"/>
</dbReference>
<dbReference type="InterPro" id="IPR024054">
    <property type="entry name" value="TIF2_asu_middle_sf"/>
</dbReference>
<dbReference type="InterPro" id="IPR011488">
    <property type="entry name" value="TIF_2_asu"/>
</dbReference>
<dbReference type="NCBIfam" id="NF003062">
    <property type="entry name" value="PRK03987.1-1"/>
    <property type="match status" value="1"/>
</dbReference>
<dbReference type="PANTHER" id="PTHR10602">
    <property type="entry name" value="EUKARYOTIC TRANSLATION INITIATION FACTOR 2 SUBUNIT 1"/>
    <property type="match status" value="1"/>
</dbReference>
<dbReference type="PANTHER" id="PTHR10602:SF0">
    <property type="entry name" value="EUKARYOTIC TRANSLATION INITIATION FACTOR 2 SUBUNIT 1"/>
    <property type="match status" value="1"/>
</dbReference>
<dbReference type="Pfam" id="PF07541">
    <property type="entry name" value="EIF_2_alpha"/>
    <property type="match status" value="1"/>
</dbReference>
<dbReference type="Pfam" id="PF00575">
    <property type="entry name" value="S1"/>
    <property type="match status" value="1"/>
</dbReference>
<dbReference type="SMART" id="SM00316">
    <property type="entry name" value="S1"/>
    <property type="match status" value="1"/>
</dbReference>
<dbReference type="SUPFAM" id="SSF110993">
    <property type="entry name" value="eIF-2-alpha, C-terminal domain"/>
    <property type="match status" value="1"/>
</dbReference>
<dbReference type="SUPFAM" id="SSF116742">
    <property type="entry name" value="eIF2alpha middle domain-like"/>
    <property type="match status" value="1"/>
</dbReference>
<dbReference type="SUPFAM" id="SSF50249">
    <property type="entry name" value="Nucleic acid-binding proteins"/>
    <property type="match status" value="1"/>
</dbReference>
<dbReference type="PROSITE" id="PS50126">
    <property type="entry name" value="S1"/>
    <property type="match status" value="1"/>
</dbReference>
<protein>
    <recommendedName>
        <fullName evidence="1">Translation initiation factor 2 subunit alpha</fullName>
    </recommendedName>
    <alternativeName>
        <fullName evidence="1">aIF2-alpha</fullName>
    </alternativeName>
    <alternativeName>
        <fullName evidence="1">eIF-2-alpha</fullName>
    </alternativeName>
</protein>
<proteinExistence type="inferred from homology"/>
<evidence type="ECO:0000255" key="1">
    <source>
        <dbReference type="HAMAP-Rule" id="MF_00231"/>
    </source>
</evidence>
<name>IF2A_SACI6</name>